<feature type="chain" id="PRO_0000213850" description="Sorting nexin-7">
    <location>
        <begin position="1"/>
        <end position="387"/>
    </location>
</feature>
<feature type="domain" description="PX" evidence="6">
    <location>
        <begin position="30"/>
        <end position="151"/>
    </location>
</feature>
<feature type="domain" description="BAR" evidence="7">
    <location>
        <begin position="178"/>
        <end position="387"/>
    </location>
</feature>
<feature type="binding site" evidence="2">
    <location>
        <position position="73"/>
    </location>
    <ligand>
        <name>a 1,2-diacyl-sn-glycero-3-phospho-(1D-myo-inositol-3-phosphate)</name>
        <dbReference type="ChEBI" id="CHEBI:58088"/>
    </ligand>
</feature>
<feature type="binding site" evidence="2">
    <location>
        <position position="75"/>
    </location>
    <ligand>
        <name>a 1,2-diacyl-sn-glycero-3-phospho-(1D-myo-inositol-3-phosphate)</name>
        <dbReference type="ChEBI" id="CHEBI:58088"/>
    </ligand>
</feature>
<feature type="binding site" evidence="4">
    <location>
        <position position="103"/>
    </location>
    <ligand>
        <name>a 1,2-diacyl-sn-glycero-3-phospho-(1D-myo-inositol-3-phosphate)</name>
        <dbReference type="ChEBI" id="CHEBI:58088"/>
    </ligand>
</feature>
<feature type="binding site" evidence="3">
    <location>
        <position position="117"/>
    </location>
    <ligand>
        <name>a 1,2-diacyl-sn-glycero-3-phospho-(1D-myo-inositol-3-phosphate)</name>
        <dbReference type="ChEBI" id="CHEBI:58088"/>
    </ligand>
</feature>
<keyword id="KW-0967">Endosome</keyword>
<keyword id="KW-0446">Lipid-binding</keyword>
<keyword id="KW-0472">Membrane</keyword>
<keyword id="KW-0653">Protein transport</keyword>
<keyword id="KW-1185">Reference proteome</keyword>
<keyword id="KW-0813">Transport</keyword>
<accession>Q9CY18</accession>
<name>SNX7_MOUSE</name>
<reference key="1">
    <citation type="journal article" date="2005" name="Science">
        <title>The transcriptional landscape of the mammalian genome.</title>
        <authorList>
            <person name="Carninci P."/>
            <person name="Kasukawa T."/>
            <person name="Katayama S."/>
            <person name="Gough J."/>
            <person name="Frith M.C."/>
            <person name="Maeda N."/>
            <person name="Oyama R."/>
            <person name="Ravasi T."/>
            <person name="Lenhard B."/>
            <person name="Wells C."/>
            <person name="Kodzius R."/>
            <person name="Shimokawa K."/>
            <person name="Bajic V.B."/>
            <person name="Brenner S.E."/>
            <person name="Batalov S."/>
            <person name="Forrest A.R."/>
            <person name="Zavolan M."/>
            <person name="Davis M.J."/>
            <person name="Wilming L.G."/>
            <person name="Aidinis V."/>
            <person name="Allen J.E."/>
            <person name="Ambesi-Impiombato A."/>
            <person name="Apweiler R."/>
            <person name="Aturaliya R.N."/>
            <person name="Bailey T.L."/>
            <person name="Bansal M."/>
            <person name="Baxter L."/>
            <person name="Beisel K.W."/>
            <person name="Bersano T."/>
            <person name="Bono H."/>
            <person name="Chalk A.M."/>
            <person name="Chiu K.P."/>
            <person name="Choudhary V."/>
            <person name="Christoffels A."/>
            <person name="Clutterbuck D.R."/>
            <person name="Crowe M.L."/>
            <person name="Dalla E."/>
            <person name="Dalrymple B.P."/>
            <person name="de Bono B."/>
            <person name="Della Gatta G."/>
            <person name="di Bernardo D."/>
            <person name="Down T."/>
            <person name="Engstrom P."/>
            <person name="Fagiolini M."/>
            <person name="Faulkner G."/>
            <person name="Fletcher C.F."/>
            <person name="Fukushima T."/>
            <person name="Furuno M."/>
            <person name="Futaki S."/>
            <person name="Gariboldi M."/>
            <person name="Georgii-Hemming P."/>
            <person name="Gingeras T.R."/>
            <person name="Gojobori T."/>
            <person name="Green R.E."/>
            <person name="Gustincich S."/>
            <person name="Harbers M."/>
            <person name="Hayashi Y."/>
            <person name="Hensch T.K."/>
            <person name="Hirokawa N."/>
            <person name="Hill D."/>
            <person name="Huminiecki L."/>
            <person name="Iacono M."/>
            <person name="Ikeo K."/>
            <person name="Iwama A."/>
            <person name="Ishikawa T."/>
            <person name="Jakt M."/>
            <person name="Kanapin A."/>
            <person name="Katoh M."/>
            <person name="Kawasawa Y."/>
            <person name="Kelso J."/>
            <person name="Kitamura H."/>
            <person name="Kitano H."/>
            <person name="Kollias G."/>
            <person name="Krishnan S.P."/>
            <person name="Kruger A."/>
            <person name="Kummerfeld S.K."/>
            <person name="Kurochkin I.V."/>
            <person name="Lareau L.F."/>
            <person name="Lazarevic D."/>
            <person name="Lipovich L."/>
            <person name="Liu J."/>
            <person name="Liuni S."/>
            <person name="McWilliam S."/>
            <person name="Madan Babu M."/>
            <person name="Madera M."/>
            <person name="Marchionni L."/>
            <person name="Matsuda H."/>
            <person name="Matsuzawa S."/>
            <person name="Miki H."/>
            <person name="Mignone F."/>
            <person name="Miyake S."/>
            <person name="Morris K."/>
            <person name="Mottagui-Tabar S."/>
            <person name="Mulder N."/>
            <person name="Nakano N."/>
            <person name="Nakauchi H."/>
            <person name="Ng P."/>
            <person name="Nilsson R."/>
            <person name="Nishiguchi S."/>
            <person name="Nishikawa S."/>
            <person name="Nori F."/>
            <person name="Ohara O."/>
            <person name="Okazaki Y."/>
            <person name="Orlando V."/>
            <person name="Pang K.C."/>
            <person name="Pavan W.J."/>
            <person name="Pavesi G."/>
            <person name="Pesole G."/>
            <person name="Petrovsky N."/>
            <person name="Piazza S."/>
            <person name="Reed J."/>
            <person name="Reid J.F."/>
            <person name="Ring B.Z."/>
            <person name="Ringwald M."/>
            <person name="Rost B."/>
            <person name="Ruan Y."/>
            <person name="Salzberg S.L."/>
            <person name="Sandelin A."/>
            <person name="Schneider C."/>
            <person name="Schoenbach C."/>
            <person name="Sekiguchi K."/>
            <person name="Semple C.A."/>
            <person name="Seno S."/>
            <person name="Sessa L."/>
            <person name="Sheng Y."/>
            <person name="Shibata Y."/>
            <person name="Shimada H."/>
            <person name="Shimada K."/>
            <person name="Silva D."/>
            <person name="Sinclair B."/>
            <person name="Sperling S."/>
            <person name="Stupka E."/>
            <person name="Sugiura K."/>
            <person name="Sultana R."/>
            <person name="Takenaka Y."/>
            <person name="Taki K."/>
            <person name="Tammoja K."/>
            <person name="Tan S.L."/>
            <person name="Tang S."/>
            <person name="Taylor M.S."/>
            <person name="Tegner J."/>
            <person name="Teichmann S.A."/>
            <person name="Ueda H.R."/>
            <person name="van Nimwegen E."/>
            <person name="Verardo R."/>
            <person name="Wei C.L."/>
            <person name="Yagi K."/>
            <person name="Yamanishi H."/>
            <person name="Zabarovsky E."/>
            <person name="Zhu S."/>
            <person name="Zimmer A."/>
            <person name="Hide W."/>
            <person name="Bult C."/>
            <person name="Grimmond S.M."/>
            <person name="Teasdale R.D."/>
            <person name="Liu E.T."/>
            <person name="Brusic V."/>
            <person name="Quackenbush J."/>
            <person name="Wahlestedt C."/>
            <person name="Mattick J.S."/>
            <person name="Hume D.A."/>
            <person name="Kai C."/>
            <person name="Sasaki D."/>
            <person name="Tomaru Y."/>
            <person name="Fukuda S."/>
            <person name="Kanamori-Katayama M."/>
            <person name="Suzuki M."/>
            <person name="Aoki J."/>
            <person name="Arakawa T."/>
            <person name="Iida J."/>
            <person name="Imamura K."/>
            <person name="Itoh M."/>
            <person name="Kato T."/>
            <person name="Kawaji H."/>
            <person name="Kawagashira N."/>
            <person name="Kawashima T."/>
            <person name="Kojima M."/>
            <person name="Kondo S."/>
            <person name="Konno H."/>
            <person name="Nakano K."/>
            <person name="Ninomiya N."/>
            <person name="Nishio T."/>
            <person name="Okada M."/>
            <person name="Plessy C."/>
            <person name="Shibata K."/>
            <person name="Shiraki T."/>
            <person name="Suzuki S."/>
            <person name="Tagami M."/>
            <person name="Waki K."/>
            <person name="Watahiki A."/>
            <person name="Okamura-Oho Y."/>
            <person name="Suzuki H."/>
            <person name="Kawai J."/>
            <person name="Hayashizaki Y."/>
        </authorList>
    </citation>
    <scope>NUCLEOTIDE SEQUENCE [LARGE SCALE MRNA]</scope>
    <source>
        <strain>C57BL/6J</strain>
        <tissue>Embryonic liver</tissue>
    </source>
</reference>
<reference key="2">
    <citation type="journal article" date="2010" name="Cell">
        <title>A tissue-specific atlas of mouse protein phosphorylation and expression.</title>
        <authorList>
            <person name="Huttlin E.L."/>
            <person name="Jedrychowski M.P."/>
            <person name="Elias J.E."/>
            <person name="Goswami T."/>
            <person name="Rad R."/>
            <person name="Beausoleil S.A."/>
            <person name="Villen J."/>
            <person name="Haas W."/>
            <person name="Sowa M.E."/>
            <person name="Gygi S.P."/>
        </authorList>
    </citation>
    <scope>IDENTIFICATION BY MASS SPECTROMETRY [LARGE SCALE ANALYSIS]</scope>
    <source>
        <tissue>Kidney</tissue>
        <tissue>Lung</tissue>
    </source>
</reference>
<evidence type="ECO:0000250" key="1">
    <source>
        <dbReference type="UniProtKB" id="O95219"/>
    </source>
</evidence>
<evidence type="ECO:0000250" key="2">
    <source>
        <dbReference type="UniProtKB" id="Q3UR97"/>
    </source>
</evidence>
<evidence type="ECO:0000250" key="3">
    <source>
        <dbReference type="UniProtKB" id="Q6P4T1"/>
    </source>
</evidence>
<evidence type="ECO:0000250" key="4">
    <source>
        <dbReference type="UniProtKB" id="Q96L94"/>
    </source>
</evidence>
<evidence type="ECO:0000250" key="5">
    <source>
        <dbReference type="UniProtKB" id="Q9UNH6"/>
    </source>
</evidence>
<evidence type="ECO:0000255" key="6">
    <source>
        <dbReference type="PROSITE-ProRule" id="PRU00147"/>
    </source>
</evidence>
<evidence type="ECO:0000255" key="7">
    <source>
        <dbReference type="PROSITE-ProRule" id="PRU00361"/>
    </source>
</evidence>
<evidence type="ECO:0000305" key="8"/>
<evidence type="ECO:0000312" key="9">
    <source>
        <dbReference type="MGI" id="MGI:1923811"/>
    </source>
</evidence>
<protein>
    <recommendedName>
        <fullName evidence="8">Sorting nexin-7</fullName>
    </recommendedName>
</protein>
<organism>
    <name type="scientific">Mus musculus</name>
    <name type="common">Mouse</name>
    <dbReference type="NCBI Taxonomy" id="10090"/>
    <lineage>
        <taxon>Eukaryota</taxon>
        <taxon>Metazoa</taxon>
        <taxon>Chordata</taxon>
        <taxon>Craniata</taxon>
        <taxon>Vertebrata</taxon>
        <taxon>Euteleostomi</taxon>
        <taxon>Mammalia</taxon>
        <taxon>Eutheria</taxon>
        <taxon>Euarchontoglires</taxon>
        <taxon>Glires</taxon>
        <taxon>Rodentia</taxon>
        <taxon>Myomorpha</taxon>
        <taxon>Muroidea</taxon>
        <taxon>Muridae</taxon>
        <taxon>Murinae</taxon>
        <taxon>Mus</taxon>
        <taxon>Mus</taxon>
    </lineage>
</organism>
<gene>
    <name evidence="9" type="primary">Snx7</name>
</gene>
<dbReference type="EMBL" id="AK011015">
    <property type="protein sequence ID" value="BAB27333.1"/>
    <property type="molecule type" value="mRNA"/>
</dbReference>
<dbReference type="SMR" id="Q9CY18"/>
<dbReference type="FunCoup" id="Q9CY18">
    <property type="interactions" value="349"/>
</dbReference>
<dbReference type="STRING" id="10090.ENSMUSP00000029639"/>
<dbReference type="GlyGen" id="Q9CY18">
    <property type="glycosylation" value="1 site, 1 O-linked glycan (1 site)"/>
</dbReference>
<dbReference type="PhosphoSitePlus" id="Q9CY18"/>
<dbReference type="jPOST" id="Q9CY18"/>
<dbReference type="PaxDb" id="10090-ENSMUSP00000029639"/>
<dbReference type="ProteomicsDB" id="261544"/>
<dbReference type="Pumba" id="Q9CY18"/>
<dbReference type="Antibodypedia" id="33676">
    <property type="antibodies" value="174 antibodies from 24 providers"/>
</dbReference>
<dbReference type="Ensembl" id="ENSMUST00000198499.5">
    <property type="protein sequence ID" value="ENSMUSP00000143230.2"/>
    <property type="gene ID" value="ENSMUSG00000028007.14"/>
</dbReference>
<dbReference type="AGR" id="MGI:1923811"/>
<dbReference type="MGI" id="MGI:1923811">
    <property type="gene designation" value="Snx7"/>
</dbReference>
<dbReference type="VEuPathDB" id="HostDB:ENSMUSG00000028007"/>
<dbReference type="eggNOG" id="KOG2273">
    <property type="taxonomic scope" value="Eukaryota"/>
</dbReference>
<dbReference type="GeneTree" id="ENSGT00940000155315"/>
<dbReference type="HOGENOM" id="CLU_040655_0_0_1"/>
<dbReference type="InParanoid" id="Q9CY18"/>
<dbReference type="OMA" id="LHYYEEC"/>
<dbReference type="PhylomeDB" id="Q9CY18"/>
<dbReference type="ChiTaRS" id="Snx7">
    <property type="organism name" value="mouse"/>
</dbReference>
<dbReference type="PRO" id="PR:Q9CY18"/>
<dbReference type="Proteomes" id="UP000000589">
    <property type="component" value="Chromosome 3"/>
</dbReference>
<dbReference type="RNAct" id="Q9CY18">
    <property type="molecule type" value="protein"/>
</dbReference>
<dbReference type="Bgee" id="ENSMUSG00000028007">
    <property type="expression patterns" value="Expressed in vault of skull and 217 other cell types or tissues"/>
</dbReference>
<dbReference type="ExpressionAtlas" id="Q9CY18">
    <property type="expression patterns" value="baseline and differential"/>
</dbReference>
<dbReference type="GO" id="GO:0005769">
    <property type="term" value="C:early endosome"/>
    <property type="evidence" value="ECO:0000250"/>
    <property type="project" value="UniProtKB"/>
</dbReference>
<dbReference type="GO" id="GO:0031901">
    <property type="term" value="C:early endosome membrane"/>
    <property type="evidence" value="ECO:0007669"/>
    <property type="project" value="UniProtKB-SubCell"/>
</dbReference>
<dbReference type="GO" id="GO:0035091">
    <property type="term" value="F:phosphatidylinositol binding"/>
    <property type="evidence" value="ECO:0007669"/>
    <property type="project" value="InterPro"/>
</dbReference>
<dbReference type="GO" id="GO:2000786">
    <property type="term" value="P:positive regulation of autophagosome assembly"/>
    <property type="evidence" value="ECO:0000250"/>
    <property type="project" value="UniProtKB"/>
</dbReference>
<dbReference type="GO" id="GO:0015031">
    <property type="term" value="P:protein transport"/>
    <property type="evidence" value="ECO:0000250"/>
    <property type="project" value="UniProtKB"/>
</dbReference>
<dbReference type="CDD" id="cd07666">
    <property type="entry name" value="BAR_SNX7"/>
    <property type="match status" value="1"/>
</dbReference>
<dbReference type="CDD" id="cd07284">
    <property type="entry name" value="PX_SNX7"/>
    <property type="match status" value="1"/>
</dbReference>
<dbReference type="Gene3D" id="1.20.1270.60">
    <property type="entry name" value="Arfaptin homology (AH) domain/BAR domain"/>
    <property type="match status" value="1"/>
</dbReference>
<dbReference type="Gene3D" id="3.30.1520.10">
    <property type="entry name" value="Phox-like domain"/>
    <property type="match status" value="1"/>
</dbReference>
<dbReference type="InterPro" id="IPR027267">
    <property type="entry name" value="AH/BAR_dom_sf"/>
</dbReference>
<dbReference type="InterPro" id="IPR042131">
    <property type="entry name" value="BAR_SNX7"/>
</dbReference>
<dbReference type="InterPro" id="IPR001683">
    <property type="entry name" value="PX_dom"/>
</dbReference>
<dbReference type="InterPro" id="IPR036871">
    <property type="entry name" value="PX_dom_sf"/>
</dbReference>
<dbReference type="InterPro" id="IPR042130">
    <property type="entry name" value="PX_SNX7"/>
</dbReference>
<dbReference type="PANTHER" id="PTHR45949">
    <property type="entry name" value="SORTING NEXIN-4"/>
    <property type="match status" value="1"/>
</dbReference>
<dbReference type="PANTHER" id="PTHR45949:SF3">
    <property type="entry name" value="SORTING NEXIN-7"/>
    <property type="match status" value="1"/>
</dbReference>
<dbReference type="Pfam" id="PF00787">
    <property type="entry name" value="PX"/>
    <property type="match status" value="1"/>
</dbReference>
<dbReference type="SMART" id="SM00312">
    <property type="entry name" value="PX"/>
    <property type="match status" value="1"/>
</dbReference>
<dbReference type="SUPFAM" id="SSF103657">
    <property type="entry name" value="BAR/IMD domain-like"/>
    <property type="match status" value="1"/>
</dbReference>
<dbReference type="SUPFAM" id="SSF64268">
    <property type="entry name" value="PX domain"/>
    <property type="match status" value="1"/>
</dbReference>
<dbReference type="PROSITE" id="PS50195">
    <property type="entry name" value="PX"/>
    <property type="match status" value="1"/>
</dbReference>
<sequence length="387" mass="45000">MDMNSFSPMMPTSPLSMINQIKFEDGPDLKDLFITVDAPESHVTTIETFITYRIVTKTSRGEFDSSEFEVRRRYQDFLWLKGKLEEAHPTLIIPPLPEKFIVKGMVERFNDDFIETRRKALHKFLNRIADHPTLTFNEDFKVFLTAQAEELSSYKKQGPGLLSRMGQTVRAVASSMRGVKNRPEEFMEMNNFIETFSQKINLIDKISQRIYKEERDYFDEMKEYGPIHILWSASEEELVDTLKGMAGCIEQCCKATEKRMAGLSEALLPVVHEYVLYSEMLVGVMKRRDQIQTELDSKVEALTYKKADIDLLTEEIGKLEDKVECANNALKADWERWKQNMKNDLRSAFTDTAEQNIRYYEQCLATWESFLTSQTDLPSEEDSEEKL</sequence>
<proteinExistence type="evidence at protein level"/>
<comment type="function">
    <text evidence="5">Involved in the regulation of endocytosis and in several stages of intracellular trafficking. Together with SNX4, involved in autophagosome assembly by regulating trafficking and recycling of phospholipid scramblase ATG9A.</text>
</comment>
<comment type="subunit">
    <text evidence="5">Heterodimer; heterodimerizes with SNX4.</text>
</comment>
<comment type="subcellular location">
    <subcellularLocation>
        <location evidence="5">Early endosome membrane</location>
        <topology evidence="1">Peripheral membrane protein</topology>
        <orientation evidence="1">Cytoplasmic side</orientation>
    </subcellularLocation>
</comment>
<comment type="similarity">
    <text evidence="8">Belongs to the sorting nexin family.</text>
</comment>